<dbReference type="EMBL" id="D13663">
    <property type="protein sequence ID" value="BAA02833.1"/>
    <property type="molecule type" value="Genomic_DNA"/>
</dbReference>
<dbReference type="EMBL" id="AL391753">
    <property type="protein sequence ID" value="CAC05832.1"/>
    <property type="molecule type" value="Genomic_DNA"/>
</dbReference>
<dbReference type="EMBL" id="AF348706">
    <property type="protein sequence ID" value="AAK18476.1"/>
    <property type="molecule type" value="Genomic_DNA"/>
</dbReference>
<dbReference type="EMBL" id="AY206439">
    <property type="protein sequence ID" value="AAP79020.1"/>
    <property type="molecule type" value="Genomic_DNA"/>
</dbReference>
<dbReference type="PIR" id="B38908">
    <property type="entry name" value="B38908"/>
</dbReference>
<dbReference type="RefSeq" id="NP_085320.1">
    <property type="nucleotide sequence ID" value="NC_002698.1"/>
</dbReference>
<dbReference type="RefSeq" id="WP_010921676.1">
    <property type="nucleotide sequence ID" value="NZ_CP097832.1"/>
</dbReference>
<dbReference type="RefSeq" id="YP_009062514.1">
    <property type="nucleotide sequence ID" value="NC_024996.1"/>
</dbReference>
<dbReference type="SMR" id="P0A243"/>
<dbReference type="PATRIC" id="fig|623.157.peg.5391"/>
<dbReference type="GO" id="GO:0071468">
    <property type="term" value="P:cellular response to acidic pH"/>
    <property type="evidence" value="ECO:0007669"/>
    <property type="project" value="InterPro"/>
</dbReference>
<dbReference type="Gene3D" id="1.20.5.5260">
    <property type="match status" value="1"/>
</dbReference>
<dbReference type="InterPro" id="IPR024753">
    <property type="entry name" value="AriR"/>
</dbReference>
<dbReference type="Pfam" id="PF10798">
    <property type="entry name" value="YmgB"/>
    <property type="match status" value="1"/>
</dbReference>
<reference key="1">
    <citation type="journal article" date="1993" name="J. Bacteriol.">
        <title>Eight genes in region 5 that form an operon are essential for invasion of epithelial cells by Shigella flexneri 2a.</title>
        <authorList>
            <person name="Sasakawa C."/>
            <person name="Komatsu K."/>
            <person name="Tobe T."/>
            <person name="Suzuki T."/>
            <person name="Yoshikawa M."/>
        </authorList>
    </citation>
    <scope>NUCLEOTIDE SEQUENCE [GENOMIC DNA]</scope>
    <source>
        <strain>YSH6000 / Serotype 2a</strain>
        <plasmid>pMYSH6000</plasmid>
    </source>
</reference>
<reference key="2">
    <citation type="journal article" date="2000" name="Mol. Microbiol.">
        <title>The virulence plasmid pWR100 and the repertoire of proteins secreted by the type III secretion apparatus of Shigella flexneri.</title>
        <authorList>
            <person name="Buchrieser C."/>
            <person name="Glaser P."/>
            <person name="Rusniok C."/>
            <person name="Nedjari H."/>
            <person name="d'Hauteville H."/>
            <person name="Kunst F."/>
            <person name="Sansonetti P.J."/>
            <person name="Parsot C."/>
        </authorList>
    </citation>
    <scope>NUCLEOTIDE SEQUENCE [GENOMIC DNA]</scope>
    <source>
        <strain>M90T / Serotype 5a</strain>
        <plasmid>pWR100</plasmid>
    </source>
</reference>
<reference key="3">
    <citation type="journal article" date="2001" name="Infect. Immun.">
        <title>Complete DNA sequence and analysis of the large virulence plasmid of Shigella flexneri.</title>
        <authorList>
            <person name="Venkatesan M.M."/>
            <person name="Goldberg M.B."/>
            <person name="Rose D.J."/>
            <person name="Grotbeck E.J."/>
            <person name="Burland V."/>
            <person name="Blattner F.R."/>
        </authorList>
    </citation>
    <scope>NUCLEOTIDE SEQUENCE [GENOMIC DNA]</scope>
    <source>
        <strain>M90T / Serotype 5a</strain>
        <plasmid>pWR501</plasmid>
    </source>
</reference>
<reference key="4">
    <citation type="journal article" date="2003" name="Infect. Immun.">
        <title>Comparison of two major forms of the Shigella virulence plasmid pINV: positive selection is a major force driving the divergence.</title>
        <authorList>
            <person name="Lan R."/>
            <person name="Stevenson G."/>
            <person name="Reeves P.R."/>
        </authorList>
    </citation>
    <scope>NUCLEOTIDE SEQUENCE [GENOMIC DNA]</scope>
    <source>
        <strain>M1382 / Serotype 6</strain>
        <plasmid>pINV_F6_M1382</plasmid>
    </source>
</reference>
<sequence>MCYMGVNFCNKIGIDQSEFEIESSIINSIANEVLNPISFLSNKDIINVLLRKISSECDLVRKDIYRCALELVVEKTPDDL</sequence>
<feature type="chain" id="PRO_0000066508" description="Uncharacterized 9.1 kDa protein in spaS 3'region">
    <location>
        <begin position="1"/>
        <end position="80"/>
    </location>
</feature>
<organism>
    <name type="scientific">Shigella flexneri</name>
    <dbReference type="NCBI Taxonomy" id="623"/>
    <lineage>
        <taxon>Bacteria</taxon>
        <taxon>Pseudomonadati</taxon>
        <taxon>Pseudomonadota</taxon>
        <taxon>Gammaproteobacteria</taxon>
        <taxon>Enterobacterales</taxon>
        <taxon>Enterobacteriaceae</taxon>
        <taxon>Shigella</taxon>
    </lineage>
</organism>
<geneLocation type="plasmid">
    <name>pWR100</name>
</geneLocation>
<geneLocation type="plasmid">
    <name>pWR501</name>
</geneLocation>
<geneLocation type="plasmid">
    <name>pMYSH6000</name>
</geneLocation>
<geneLocation type="plasmid">
    <name>pINV_F6_M1382</name>
</geneLocation>
<protein>
    <recommendedName>
        <fullName>Uncharacterized 9.1 kDa protein in spaS 3'region</fullName>
    </recommendedName>
    <alternativeName>
        <fullName>SPA-ORF10</fullName>
        <shortName>ORF-10</shortName>
    </alternativeName>
</protein>
<accession>P0A243</accession>
<accession>Q55298</accession>
<proteinExistence type="predicted"/>
<name>YSPT_SHIFL</name>
<keyword id="KW-0614">Plasmid</keyword>